<dbReference type="EC" id="3.6.5.3" evidence="2"/>
<dbReference type="EMBL" id="AP006878">
    <property type="protein sequence ID" value="BAD84497.1"/>
    <property type="molecule type" value="Genomic_DNA"/>
</dbReference>
<dbReference type="RefSeq" id="WP_011249263.1">
    <property type="nucleotide sequence ID" value="NC_006624.1"/>
</dbReference>
<dbReference type="SMR" id="Q5JFZ4"/>
<dbReference type="FunCoup" id="Q5JFZ4">
    <property type="interactions" value="111"/>
</dbReference>
<dbReference type="IntAct" id="Q5JFZ4">
    <property type="interactions" value="1"/>
</dbReference>
<dbReference type="MINT" id="Q5JFZ4"/>
<dbReference type="STRING" id="69014.TK0308"/>
<dbReference type="EnsemblBacteria" id="BAD84497">
    <property type="protein sequence ID" value="BAD84497"/>
    <property type="gene ID" value="TK0308"/>
</dbReference>
<dbReference type="GeneID" id="78446813"/>
<dbReference type="KEGG" id="tko:TK0308"/>
<dbReference type="PATRIC" id="fig|69014.16.peg.307"/>
<dbReference type="eggNOG" id="arCOG01561">
    <property type="taxonomic scope" value="Archaea"/>
</dbReference>
<dbReference type="HOGENOM" id="CLU_007265_0_0_2"/>
<dbReference type="InParanoid" id="Q5JFZ4"/>
<dbReference type="OrthoDB" id="371718at2157"/>
<dbReference type="PhylomeDB" id="Q5JFZ4"/>
<dbReference type="Proteomes" id="UP000000536">
    <property type="component" value="Chromosome"/>
</dbReference>
<dbReference type="GO" id="GO:0005737">
    <property type="term" value="C:cytoplasm"/>
    <property type="evidence" value="ECO:0007669"/>
    <property type="project" value="UniProtKB-SubCell"/>
</dbReference>
<dbReference type="GO" id="GO:0005525">
    <property type="term" value="F:GTP binding"/>
    <property type="evidence" value="ECO:0007669"/>
    <property type="project" value="UniProtKB-UniRule"/>
</dbReference>
<dbReference type="GO" id="GO:0003924">
    <property type="term" value="F:GTPase activity"/>
    <property type="evidence" value="ECO:0007669"/>
    <property type="project" value="InterPro"/>
</dbReference>
<dbReference type="GO" id="GO:0003746">
    <property type="term" value="F:translation elongation factor activity"/>
    <property type="evidence" value="ECO:0007669"/>
    <property type="project" value="UniProtKB-UniRule"/>
</dbReference>
<dbReference type="CDD" id="cd01883">
    <property type="entry name" value="EF1_alpha"/>
    <property type="match status" value="1"/>
</dbReference>
<dbReference type="CDD" id="cd03693">
    <property type="entry name" value="EF1_alpha_II"/>
    <property type="match status" value="1"/>
</dbReference>
<dbReference type="CDD" id="cd03705">
    <property type="entry name" value="EF1_alpha_III"/>
    <property type="match status" value="1"/>
</dbReference>
<dbReference type="FunFam" id="2.40.30.10:FF:000003">
    <property type="entry name" value="Elongation factor 1-alpha"/>
    <property type="match status" value="1"/>
</dbReference>
<dbReference type="FunFam" id="2.40.30.10:FF:000005">
    <property type="entry name" value="Elongation factor 1-alpha"/>
    <property type="match status" value="1"/>
</dbReference>
<dbReference type="Gene3D" id="3.40.50.300">
    <property type="entry name" value="P-loop containing nucleotide triphosphate hydrolases"/>
    <property type="match status" value="1"/>
</dbReference>
<dbReference type="Gene3D" id="2.40.30.10">
    <property type="entry name" value="Translation factors"/>
    <property type="match status" value="2"/>
</dbReference>
<dbReference type="HAMAP" id="MF_00118_A">
    <property type="entry name" value="EF_Tu_A"/>
    <property type="match status" value="1"/>
</dbReference>
<dbReference type="InterPro" id="IPR004161">
    <property type="entry name" value="EFTu-like_2"/>
</dbReference>
<dbReference type="InterPro" id="IPR031157">
    <property type="entry name" value="G_TR_CS"/>
</dbReference>
<dbReference type="InterPro" id="IPR054696">
    <property type="entry name" value="GTP-eEF1A_C"/>
</dbReference>
<dbReference type="InterPro" id="IPR027417">
    <property type="entry name" value="P-loop_NTPase"/>
</dbReference>
<dbReference type="InterPro" id="IPR005225">
    <property type="entry name" value="Small_GTP-bd"/>
</dbReference>
<dbReference type="InterPro" id="IPR000795">
    <property type="entry name" value="T_Tr_GTP-bd_dom"/>
</dbReference>
<dbReference type="InterPro" id="IPR050100">
    <property type="entry name" value="TRAFAC_GTPase_members"/>
</dbReference>
<dbReference type="InterPro" id="IPR009000">
    <property type="entry name" value="Transl_B-barrel_sf"/>
</dbReference>
<dbReference type="InterPro" id="IPR009001">
    <property type="entry name" value="Transl_elong_EF1A/Init_IF2_C"/>
</dbReference>
<dbReference type="InterPro" id="IPR004539">
    <property type="entry name" value="Transl_elong_EF1A_euk/arc"/>
</dbReference>
<dbReference type="NCBIfam" id="TIGR00483">
    <property type="entry name" value="EF-1_alpha"/>
    <property type="match status" value="1"/>
</dbReference>
<dbReference type="NCBIfam" id="NF008969">
    <property type="entry name" value="PRK12317.1"/>
    <property type="match status" value="1"/>
</dbReference>
<dbReference type="NCBIfam" id="TIGR00231">
    <property type="entry name" value="small_GTP"/>
    <property type="match status" value="1"/>
</dbReference>
<dbReference type="PANTHER" id="PTHR23115">
    <property type="entry name" value="TRANSLATION FACTOR"/>
    <property type="match status" value="1"/>
</dbReference>
<dbReference type="Pfam" id="PF22594">
    <property type="entry name" value="GTP-eEF1A_C"/>
    <property type="match status" value="1"/>
</dbReference>
<dbReference type="Pfam" id="PF00009">
    <property type="entry name" value="GTP_EFTU"/>
    <property type="match status" value="1"/>
</dbReference>
<dbReference type="Pfam" id="PF03144">
    <property type="entry name" value="GTP_EFTU_D2"/>
    <property type="match status" value="1"/>
</dbReference>
<dbReference type="PRINTS" id="PR00315">
    <property type="entry name" value="ELONGATNFCT"/>
</dbReference>
<dbReference type="SUPFAM" id="SSF50465">
    <property type="entry name" value="EF-Tu/eEF-1alpha/eIF2-gamma C-terminal domain"/>
    <property type="match status" value="1"/>
</dbReference>
<dbReference type="SUPFAM" id="SSF52540">
    <property type="entry name" value="P-loop containing nucleoside triphosphate hydrolases"/>
    <property type="match status" value="1"/>
</dbReference>
<dbReference type="SUPFAM" id="SSF50447">
    <property type="entry name" value="Translation proteins"/>
    <property type="match status" value="1"/>
</dbReference>
<dbReference type="PROSITE" id="PS00301">
    <property type="entry name" value="G_TR_1"/>
    <property type="match status" value="1"/>
</dbReference>
<dbReference type="PROSITE" id="PS51722">
    <property type="entry name" value="G_TR_2"/>
    <property type="match status" value="1"/>
</dbReference>
<comment type="function">
    <text evidence="2">GTP hydrolase that promotes the GTP-dependent binding of aminoacyl-tRNA to the A-site of ribosomes during protein biosynthesis.</text>
</comment>
<comment type="catalytic activity">
    <reaction evidence="2">
        <text>GTP + H2O = GDP + phosphate + H(+)</text>
        <dbReference type="Rhea" id="RHEA:19669"/>
        <dbReference type="ChEBI" id="CHEBI:15377"/>
        <dbReference type="ChEBI" id="CHEBI:15378"/>
        <dbReference type="ChEBI" id="CHEBI:37565"/>
        <dbReference type="ChEBI" id="CHEBI:43474"/>
        <dbReference type="ChEBI" id="CHEBI:58189"/>
        <dbReference type="EC" id="3.6.5.3"/>
    </reaction>
    <physiologicalReaction direction="left-to-right" evidence="2">
        <dbReference type="Rhea" id="RHEA:19670"/>
    </physiologicalReaction>
</comment>
<comment type="subcellular location">
    <subcellularLocation>
        <location evidence="2">Cytoplasm</location>
    </subcellularLocation>
</comment>
<comment type="similarity">
    <text evidence="2">Belongs to the TRAFAC class translation factor GTPase superfamily. Classic translation factor GTPase family. EF-Tu/EF-1A subfamily.</text>
</comment>
<feature type="chain" id="PRO_0000090991" description="Elongation factor 1-alpha">
    <location>
        <begin position="1"/>
        <end position="428"/>
    </location>
</feature>
<feature type="domain" description="tr-type G">
    <location>
        <begin position="5"/>
        <end position="215"/>
    </location>
</feature>
<feature type="region of interest" description="G1" evidence="1">
    <location>
        <begin position="14"/>
        <end position="21"/>
    </location>
</feature>
<feature type="region of interest" description="G2" evidence="1">
    <location>
        <begin position="68"/>
        <end position="72"/>
    </location>
</feature>
<feature type="region of interest" description="G3" evidence="1">
    <location>
        <begin position="89"/>
        <end position="92"/>
    </location>
</feature>
<feature type="region of interest" description="G4" evidence="1">
    <location>
        <begin position="144"/>
        <end position="147"/>
    </location>
</feature>
<feature type="region of interest" description="G5" evidence="1">
    <location>
        <begin position="181"/>
        <end position="183"/>
    </location>
</feature>
<feature type="binding site" evidence="2">
    <location>
        <begin position="14"/>
        <end position="21"/>
    </location>
    <ligand>
        <name>GTP</name>
        <dbReference type="ChEBI" id="CHEBI:37565"/>
    </ligand>
</feature>
<feature type="binding site" evidence="2">
    <location>
        <position position="21"/>
    </location>
    <ligand>
        <name>Mg(2+)</name>
        <dbReference type="ChEBI" id="CHEBI:18420"/>
    </ligand>
</feature>
<feature type="binding site" evidence="2">
    <location>
        <begin position="89"/>
        <end position="93"/>
    </location>
    <ligand>
        <name>GTP</name>
        <dbReference type="ChEBI" id="CHEBI:37565"/>
    </ligand>
</feature>
<feature type="binding site" evidence="2">
    <location>
        <begin position="144"/>
        <end position="147"/>
    </location>
    <ligand>
        <name>GTP</name>
        <dbReference type="ChEBI" id="CHEBI:37565"/>
    </ligand>
</feature>
<name>EF1A_THEKO</name>
<sequence length="428" mass="47516">MAKEKPHVNIVFIGHVDHGKSTTIGRLLFDTANIPENIIKKFEEMGEKGKSFKFAWVMDRLKEERERGITIDVAHTKFETPHRYITIIDAPGHRDFVKNMITGASQADAAVLVVAATDGVMPQTKEHAFLARTLGINHIIVAINKMDMVNYDEKKFKQVAEQVKKLLQMLGYKDFPIIPISAWEGDNVVKKSDKMPWYNGPTLLEALDQIPEPPKPVDKPLRIPIQDVYSIKGVGTVPVGRVETGVLRVGDVVIFEPASTIFHKPIQGEVKSIEMHHEPLQEAYPGDNIGFNVRGVGKNDIKRGDVAGHTTNPPTVVRPKDTFKAQIIVLNHPTAITVGYTPVLHAHTTQVAVRFEQLLAKLDPRTGNIVEENPQFIKTGDSAIVILRPTKAMVIEPVKEIPQMGRFAIRDMGQTVAAGMVISIQKAD</sequence>
<protein>
    <recommendedName>
        <fullName evidence="2">Elongation factor 1-alpha</fullName>
        <shortName evidence="2">EF-1-alpha</shortName>
        <ecNumber evidence="2">3.6.5.3</ecNumber>
    </recommendedName>
    <alternativeName>
        <fullName evidence="2">Elongation factor Tu</fullName>
        <shortName evidence="2">EF-Tu</shortName>
    </alternativeName>
</protein>
<organism>
    <name type="scientific">Thermococcus kodakarensis (strain ATCC BAA-918 / JCM 12380 / KOD1)</name>
    <name type="common">Pyrococcus kodakaraensis (strain KOD1)</name>
    <dbReference type="NCBI Taxonomy" id="69014"/>
    <lineage>
        <taxon>Archaea</taxon>
        <taxon>Methanobacteriati</taxon>
        <taxon>Methanobacteriota</taxon>
        <taxon>Thermococci</taxon>
        <taxon>Thermococcales</taxon>
        <taxon>Thermococcaceae</taxon>
        <taxon>Thermococcus</taxon>
    </lineage>
</organism>
<evidence type="ECO:0000250" key="1"/>
<evidence type="ECO:0000255" key="2">
    <source>
        <dbReference type="HAMAP-Rule" id="MF_00118"/>
    </source>
</evidence>
<proteinExistence type="inferred from homology"/>
<gene>
    <name evidence="2" type="primary">tuf</name>
    <name type="ordered locus">TK0308</name>
</gene>
<accession>Q5JFZ4</accession>
<reference key="1">
    <citation type="journal article" date="2005" name="Genome Res.">
        <title>Complete genome sequence of the hyperthermophilic archaeon Thermococcus kodakaraensis KOD1 and comparison with Pyrococcus genomes.</title>
        <authorList>
            <person name="Fukui T."/>
            <person name="Atomi H."/>
            <person name="Kanai T."/>
            <person name="Matsumi R."/>
            <person name="Fujiwara S."/>
            <person name="Imanaka T."/>
        </authorList>
    </citation>
    <scope>NUCLEOTIDE SEQUENCE [LARGE SCALE GENOMIC DNA]</scope>
    <source>
        <strain>ATCC BAA-918 / JCM 12380 / KOD1</strain>
    </source>
</reference>
<keyword id="KW-0963">Cytoplasm</keyword>
<keyword id="KW-0251">Elongation factor</keyword>
<keyword id="KW-0342">GTP-binding</keyword>
<keyword id="KW-0378">Hydrolase</keyword>
<keyword id="KW-0460">Magnesium</keyword>
<keyword id="KW-0479">Metal-binding</keyword>
<keyword id="KW-0547">Nucleotide-binding</keyword>
<keyword id="KW-0648">Protein biosynthesis</keyword>
<keyword id="KW-1185">Reference proteome</keyword>